<keyword id="KW-1203">Blood coagulation cascade inhibiting toxin</keyword>
<keyword id="KW-0106">Calcium</keyword>
<keyword id="KW-0903">Direct protein sequencing</keyword>
<keyword id="KW-1015">Disulfide bond</keyword>
<keyword id="KW-0325">Glycoprotein</keyword>
<keyword id="KW-1199">Hemostasis impairing toxin</keyword>
<keyword id="KW-0479">Metal-binding</keyword>
<keyword id="KW-0964">Secreted</keyword>
<keyword id="KW-0800">Toxin</keyword>
<feature type="chain" id="PRO_0000355257" description="Snaclec coagulation factor IX/factor X-binding protein subunit B">
    <location>
        <begin position="1"/>
        <end position="30" status="greater than"/>
    </location>
</feature>
<feature type="domain" description="C-type lectin" evidence="2">
    <location>
        <begin position="9"/>
        <end position="30" status="greater than"/>
    </location>
</feature>
<feature type="disulfide bond" evidence="2">
    <location>
        <begin position="2"/>
        <end position="13"/>
    </location>
</feature>
<feature type="unsure residue" description="Assigned by comparison with orthologs">
    <location>
        <position position="23"/>
    </location>
</feature>
<feature type="non-terminal residue">
    <location>
        <position position="30"/>
    </location>
</feature>
<accession>Q9PS06</accession>
<dbReference type="PIR" id="A53088">
    <property type="entry name" value="A53088"/>
</dbReference>
<dbReference type="SMR" id="Q9PS06"/>
<dbReference type="GO" id="GO:0005576">
    <property type="term" value="C:extracellular region"/>
    <property type="evidence" value="ECO:0007669"/>
    <property type="project" value="UniProtKB-SubCell"/>
</dbReference>
<dbReference type="GO" id="GO:0046872">
    <property type="term" value="F:metal ion binding"/>
    <property type="evidence" value="ECO:0007669"/>
    <property type="project" value="UniProtKB-KW"/>
</dbReference>
<dbReference type="GO" id="GO:0090729">
    <property type="term" value="F:toxin activity"/>
    <property type="evidence" value="ECO:0007669"/>
    <property type="project" value="UniProtKB-KW"/>
</dbReference>
<dbReference type="Gene3D" id="3.10.100.10">
    <property type="entry name" value="Mannose-Binding Protein A, subunit A"/>
    <property type="match status" value="1"/>
</dbReference>
<dbReference type="InterPro" id="IPR016186">
    <property type="entry name" value="C-type_lectin-like/link_sf"/>
</dbReference>
<dbReference type="InterPro" id="IPR016187">
    <property type="entry name" value="CTDL_fold"/>
</dbReference>
<dbReference type="SUPFAM" id="SSF56436">
    <property type="entry name" value="C-type lectin-like"/>
    <property type="match status" value="1"/>
</dbReference>
<protein>
    <recommendedName>
        <fullName>Snaclec coagulation factor IX/factor X-binding protein subunit B</fullName>
        <shortName>IX/X-bp subunit B</shortName>
    </recommendedName>
</protein>
<name>SL9B_BOTJA</name>
<sequence>DCPSDWSPYEGHCYRVFTEPQNWADAEKFC</sequence>
<reference key="1">
    <citation type="journal article" date="1993" name="Biochemistry">
        <title>Isolation and characterization of an anticoagulant protein homologous to botrocetin from the venom of Bothrops jararaca.</title>
        <authorList>
            <person name="Sekiya F."/>
            <person name="Atoda H."/>
            <person name="Morita T."/>
        </authorList>
    </citation>
    <scope>PROTEIN SEQUENCE</scope>
    <source>
        <tissue>Venom</tissue>
    </source>
</reference>
<reference key="2">
    <citation type="journal article" date="2010" name="J. Proteome Res.">
        <title>Analysis of the ontogenetic variation in the venom proteome/peptidome of Bothrops jararaca reveals different strategies to deal with prey.</title>
        <authorList>
            <person name="Zelanis A."/>
            <person name="Tashima A.K."/>
            <person name="Rocha M.M."/>
            <person name="Furtado M.F."/>
            <person name="Camargo A.C."/>
            <person name="Ho P.L."/>
            <person name="Serrano S.M."/>
        </authorList>
    </citation>
    <scope>IDENTIFICATION BY MASS SPECTROMETRY</scope>
    <scope>DEVELOPMENTAL STAGE</scope>
    <scope>GLYCOSYLATION</scope>
    <source>
        <tissue>Venom</tissue>
    </source>
</reference>
<evidence type="ECO:0000250" key="1"/>
<evidence type="ECO:0000255" key="2">
    <source>
        <dbReference type="PROSITE-ProRule" id="PRU00040"/>
    </source>
</evidence>
<evidence type="ECO:0000269" key="3">
    <source>
    </source>
</evidence>
<evidence type="ECO:0000305" key="4"/>
<proteinExistence type="evidence at protein level"/>
<organism>
    <name type="scientific">Bothrops jararaca</name>
    <name type="common">Jararaca</name>
    <name type="synonym">Bothrops jajaraca</name>
    <dbReference type="NCBI Taxonomy" id="8724"/>
    <lineage>
        <taxon>Eukaryota</taxon>
        <taxon>Metazoa</taxon>
        <taxon>Chordata</taxon>
        <taxon>Craniata</taxon>
        <taxon>Vertebrata</taxon>
        <taxon>Euteleostomi</taxon>
        <taxon>Lepidosauria</taxon>
        <taxon>Squamata</taxon>
        <taxon>Bifurcata</taxon>
        <taxon>Unidentata</taxon>
        <taxon>Episquamata</taxon>
        <taxon>Toxicofera</taxon>
        <taxon>Serpentes</taxon>
        <taxon>Colubroidea</taxon>
        <taxon>Viperidae</taxon>
        <taxon>Crotalinae</taxon>
        <taxon>Bothrops</taxon>
    </lineage>
</organism>
<comment type="function">
    <text evidence="1">Anticoagulant protein which binds to the gamma-carboxyglutamic acid-domain regions of factors IX (F9) and factor X (F10) in the presence of calcium with a 1 to 1 stoichiometry.</text>
</comment>
<comment type="subunit">
    <text evidence="1">Heterodimer of subunits A and B; disulfide-linked.</text>
</comment>
<comment type="subcellular location">
    <subcellularLocation>
        <location evidence="1">Secreted</location>
    </subcellularLocation>
</comment>
<comment type="tissue specificity">
    <text>Expressed by the venom gland.</text>
</comment>
<comment type="developmental stage">
    <text evidence="3">This protein seems to be found in newborn B.jararaca venom but not in adult snake venom.</text>
</comment>
<comment type="PTM">
    <text evidence="3">Glycosylated.</text>
</comment>
<comment type="miscellaneous">
    <text evidence="1">Calcium is required for ligand binding.</text>
</comment>
<comment type="similarity">
    <text evidence="4">Belongs to the snaclec family.</text>
</comment>